<gene>
    <name type="primary">Agxt2</name>
</gene>
<comment type="function">
    <text evidence="2 4 5 6 7">Multifunctional aminotransferase with a broad substrate specificity (PubMed:23023372, PubMed:23154179, PubMed:23280748, PubMed:27062388). Catalyzes the conversion of glyoxylate to glycine using alanine as the amino donor (By similarity). Catalyzes metabolism of not L- but the D-isomer of D-beta-aminoisobutyric acid to generate 2-methyl-3-oxopropanoate and alanine (PubMed:27062388). Catalyzes the transfer of the amino group from beta-alanine to pyruvate to yield L-alanine and 3-oxopropanoate (PubMed:27062388). Can metabolize NG-monomethyl-L-arginine (NMMA), asymmetric NG,NG-dimethyl-L-arginine (ADMA) and symmetric NG,N'G-dimethyl-L-arginine (SDMA) (PubMed:23023372, PubMed:23154179, PubMed:23280748). ADMA is a potent inhibitor of nitric-oxide (NO) synthase, and this activity provides mechanism through which the kidney regulates blood pressure (PubMed:23023372).</text>
</comment>
<comment type="catalytic activity">
    <reaction evidence="2">
        <text>glyoxylate + L-alanine = glycine + pyruvate</text>
        <dbReference type="Rhea" id="RHEA:24248"/>
        <dbReference type="ChEBI" id="CHEBI:15361"/>
        <dbReference type="ChEBI" id="CHEBI:36655"/>
        <dbReference type="ChEBI" id="CHEBI:57305"/>
        <dbReference type="ChEBI" id="CHEBI:57972"/>
        <dbReference type="EC" id="2.6.1.44"/>
    </reaction>
    <physiologicalReaction direction="left-to-right" evidence="2">
        <dbReference type="Rhea" id="RHEA:24249"/>
    </physiologicalReaction>
</comment>
<comment type="catalytic activity">
    <reaction evidence="7">
        <text>(R)-3-amino-2-methylpropanoate + pyruvate = 2-methyl-3-oxopropanoate + L-alanine</text>
        <dbReference type="Rhea" id="RHEA:18393"/>
        <dbReference type="ChEBI" id="CHEBI:15361"/>
        <dbReference type="ChEBI" id="CHEBI:57700"/>
        <dbReference type="ChEBI" id="CHEBI:57731"/>
        <dbReference type="ChEBI" id="CHEBI:57972"/>
        <dbReference type="EC" id="2.6.1.40"/>
    </reaction>
    <physiologicalReaction direction="left-to-right" evidence="9">
        <dbReference type="Rhea" id="RHEA:18394"/>
    </physiologicalReaction>
</comment>
<comment type="catalytic activity">
    <reaction evidence="7">
        <text>3-oxopropanoate + L-alanine = beta-alanine + pyruvate</text>
        <dbReference type="Rhea" id="RHEA:14077"/>
        <dbReference type="ChEBI" id="CHEBI:15361"/>
        <dbReference type="ChEBI" id="CHEBI:33190"/>
        <dbReference type="ChEBI" id="CHEBI:57966"/>
        <dbReference type="ChEBI" id="CHEBI:57972"/>
        <dbReference type="EC" id="2.6.1.18"/>
    </reaction>
    <physiologicalReaction direction="right-to-left" evidence="9">
        <dbReference type="Rhea" id="RHEA:14079"/>
    </physiologicalReaction>
</comment>
<comment type="catalytic activity">
    <reaction evidence="2">
        <text>2-oxobutanoate + L-alanine = (2S)-2-aminobutanoate + pyruvate</text>
        <dbReference type="Rhea" id="RHEA:77355"/>
        <dbReference type="ChEBI" id="CHEBI:15361"/>
        <dbReference type="ChEBI" id="CHEBI:16763"/>
        <dbReference type="ChEBI" id="CHEBI:57972"/>
        <dbReference type="ChEBI" id="CHEBI:74359"/>
        <dbReference type="EC" id="2.6.1.44"/>
    </reaction>
</comment>
<comment type="catalytic activity">
    <reaction evidence="4 6">
        <text>N(omega),N(omega)-dimethyl-L-arginine + pyruvate = 5-(3,3-dimethylguanidino)-2-oxopentanoate + L-alanine</text>
        <dbReference type="Rhea" id="RHEA:77303"/>
        <dbReference type="ChEBI" id="CHEBI:15361"/>
        <dbReference type="ChEBI" id="CHEBI:57972"/>
        <dbReference type="ChEBI" id="CHEBI:58326"/>
        <dbReference type="ChEBI" id="CHEBI:197301"/>
    </reaction>
</comment>
<comment type="catalytic activity">
    <reaction evidence="2">
        <text>N(omega),N('omega)-dimethyl-L-arginine + pyruvate = 5-(3,3'-dimethylguanidino)-2-oxopentanoate + L-alanine</text>
        <dbReference type="Rhea" id="RHEA:77307"/>
        <dbReference type="ChEBI" id="CHEBI:15361"/>
        <dbReference type="ChEBI" id="CHEBI:57972"/>
        <dbReference type="ChEBI" id="CHEBI:197308"/>
        <dbReference type="ChEBI" id="CHEBI:197310"/>
    </reaction>
</comment>
<comment type="catalytic activity">
    <reaction evidence="2">
        <text>N(omega),N(omega)-dimethyl-L-arginine + glyoxylate = 5-(3,3-dimethylguanidino)-2-oxopentanoate + glycine</text>
        <dbReference type="Rhea" id="RHEA:77311"/>
        <dbReference type="ChEBI" id="CHEBI:36655"/>
        <dbReference type="ChEBI" id="CHEBI:57305"/>
        <dbReference type="ChEBI" id="CHEBI:58326"/>
        <dbReference type="ChEBI" id="CHEBI:197301"/>
    </reaction>
</comment>
<comment type="catalytic activity">
    <reaction evidence="2">
        <text>N(omega),N('omega)-dimethyl-L-arginine + glyoxylate = 5-(3,3'-dimethylguanidino)-2-oxopentanoate + glycine</text>
        <dbReference type="Rhea" id="RHEA:77315"/>
        <dbReference type="ChEBI" id="CHEBI:36655"/>
        <dbReference type="ChEBI" id="CHEBI:57305"/>
        <dbReference type="ChEBI" id="CHEBI:197308"/>
        <dbReference type="ChEBI" id="CHEBI:197310"/>
    </reaction>
</comment>
<comment type="catalytic activity">
    <reaction evidence="2">
        <text>N(omega)-methyl-L-arginine + pyruvate = 5-(3-methylguanidino)-2-oxopentanoate + L-alanine</text>
        <dbReference type="Rhea" id="RHEA:77319"/>
        <dbReference type="ChEBI" id="CHEBI:15361"/>
        <dbReference type="ChEBI" id="CHEBI:57972"/>
        <dbReference type="ChEBI" id="CHEBI:114953"/>
        <dbReference type="ChEBI" id="CHEBI:197314"/>
    </reaction>
</comment>
<comment type="catalytic activity">
    <reaction evidence="2">
        <text>N(omega)-methyl-L-arginine + glyoxylate = 5-(3-methylguanidino)-2-oxopentanoate + glycine</text>
        <dbReference type="Rhea" id="RHEA:77323"/>
        <dbReference type="ChEBI" id="CHEBI:36655"/>
        <dbReference type="ChEBI" id="CHEBI:57305"/>
        <dbReference type="ChEBI" id="CHEBI:114953"/>
        <dbReference type="ChEBI" id="CHEBI:197314"/>
    </reaction>
</comment>
<comment type="catalytic activity">
    <reaction evidence="2">
        <text>L-ornithine + pyruvate = 5-amino-2-oxopentanoate + L-alanine</text>
        <dbReference type="Rhea" id="RHEA:77327"/>
        <dbReference type="ChEBI" id="CHEBI:15361"/>
        <dbReference type="ChEBI" id="CHEBI:46911"/>
        <dbReference type="ChEBI" id="CHEBI:57972"/>
        <dbReference type="ChEBI" id="CHEBI:58802"/>
    </reaction>
</comment>
<comment type="catalytic activity">
    <reaction evidence="2">
        <text>L-ornithine + glyoxylate = 5-amino-2-oxopentanoate + glycine</text>
        <dbReference type="Rhea" id="RHEA:77331"/>
        <dbReference type="ChEBI" id="CHEBI:36655"/>
        <dbReference type="ChEBI" id="CHEBI:46911"/>
        <dbReference type="ChEBI" id="CHEBI:57305"/>
        <dbReference type="ChEBI" id="CHEBI:58802"/>
    </reaction>
</comment>
<comment type="catalytic activity">
    <reaction evidence="2">
        <text>(2S)-2-aminobutanoate + glyoxylate = 2-oxobutanoate + glycine</text>
        <dbReference type="Rhea" id="RHEA:77339"/>
        <dbReference type="ChEBI" id="CHEBI:16763"/>
        <dbReference type="ChEBI" id="CHEBI:36655"/>
        <dbReference type="ChEBI" id="CHEBI:57305"/>
        <dbReference type="ChEBI" id="CHEBI:74359"/>
    </reaction>
</comment>
<comment type="catalytic activity">
    <reaction evidence="2">
        <text>N(omega),N(omega)-dimethyl-L-arginine + oxaloacetate = 5-(3,3-dimethylguanidino)-2-oxopentanoate + L-aspartate</text>
        <dbReference type="Rhea" id="RHEA:77343"/>
        <dbReference type="ChEBI" id="CHEBI:16452"/>
        <dbReference type="ChEBI" id="CHEBI:29991"/>
        <dbReference type="ChEBI" id="CHEBI:58326"/>
        <dbReference type="ChEBI" id="CHEBI:197301"/>
    </reaction>
</comment>
<comment type="catalytic activity">
    <reaction evidence="2">
        <text>oxaloacetate + L-alanine = L-aspartate + pyruvate</text>
        <dbReference type="Rhea" id="RHEA:77347"/>
        <dbReference type="ChEBI" id="CHEBI:15361"/>
        <dbReference type="ChEBI" id="CHEBI:16452"/>
        <dbReference type="ChEBI" id="CHEBI:29991"/>
        <dbReference type="ChEBI" id="CHEBI:57972"/>
    </reaction>
</comment>
<comment type="catalytic activity">
    <reaction evidence="2">
        <text>N(omega),N(omega)-dimethyl-L-arginine + 2-oxobutanoate = 5-(3,3-dimethylguanidino)-2-oxopentanoate + (2S)-2-aminobutanoate</text>
        <dbReference type="Rhea" id="RHEA:77351"/>
        <dbReference type="ChEBI" id="CHEBI:16763"/>
        <dbReference type="ChEBI" id="CHEBI:58326"/>
        <dbReference type="ChEBI" id="CHEBI:74359"/>
        <dbReference type="ChEBI" id="CHEBI:197301"/>
    </reaction>
</comment>
<comment type="catalytic activity">
    <reaction evidence="2">
        <text>2-oxopentanoate + N(omega),N(omega)-dimethyl-L-arginine = 5-(3,3-dimethylguanidino)-2-oxopentanoate + L-2-aminopentanoate</text>
        <dbReference type="Rhea" id="RHEA:77359"/>
        <dbReference type="ChEBI" id="CHEBI:28644"/>
        <dbReference type="ChEBI" id="CHEBI:58326"/>
        <dbReference type="ChEBI" id="CHEBI:58441"/>
        <dbReference type="ChEBI" id="CHEBI:197301"/>
    </reaction>
</comment>
<comment type="catalytic activity">
    <reaction evidence="2">
        <text>2-oxohexanoate + N(omega),N(omega)-dimethyl-L-arginine = L-2-aminohexanoate + 5-(3,3-dimethylguanidino)-2-oxopentanoate</text>
        <dbReference type="Rhea" id="RHEA:77363"/>
        <dbReference type="ChEBI" id="CHEBI:35177"/>
        <dbReference type="ChEBI" id="CHEBI:58326"/>
        <dbReference type="ChEBI" id="CHEBI:58455"/>
        <dbReference type="ChEBI" id="CHEBI:197301"/>
    </reaction>
</comment>
<comment type="cofactor">
    <cofactor evidence="2">
        <name>pyridoxal 5'-phosphate</name>
        <dbReference type="ChEBI" id="CHEBI:597326"/>
    </cofactor>
</comment>
<comment type="activity regulation">
    <text evidence="7">(R)-3-amino-2-methylpropionate--pyruvate transaminase and beta-alanine-pyruvate aminotransferase are inhibited by aminooxyacetic acid.</text>
</comment>
<comment type="subunit">
    <text evidence="2">Homotetramer.</text>
</comment>
<comment type="subcellular location">
    <subcellularLocation>
        <location evidence="3">Mitochondrion</location>
    </subcellularLocation>
</comment>
<comment type="tissue specificity">
    <text evidence="6 7">Expressed in the liver and kidney.</text>
</comment>
<comment type="disruption phenotype">
    <text evidence="4">Knockout mice are hypertensive.</text>
</comment>
<comment type="similarity">
    <text evidence="8">Belongs to the class-III pyridoxal-phosphate-dependent aminotransferase family.</text>
</comment>
<keyword id="KW-0007">Acetylation</keyword>
<keyword id="KW-0032">Aminotransferase</keyword>
<keyword id="KW-0496">Mitochondrion</keyword>
<keyword id="KW-0663">Pyridoxal phosphate</keyword>
<keyword id="KW-1185">Reference proteome</keyword>
<keyword id="KW-0808">Transferase</keyword>
<keyword id="KW-0809">Transit peptide</keyword>
<feature type="transit peptide" description="Mitochondrion" evidence="3">
    <location>
        <begin position="1"/>
        <end position="40"/>
    </location>
</feature>
<feature type="chain" id="PRO_0000283753" description="Alanine--glyoxylate aminotransferase 2, mitochondrial">
    <location>
        <begin position="41"/>
        <end position="513"/>
    </location>
</feature>
<feature type="modified residue" description="N6-acetyllysine" evidence="10">
    <location>
        <position position="56"/>
    </location>
</feature>
<feature type="modified residue" description="N6-acetyllysine; alternate" evidence="10">
    <location>
        <position position="70"/>
    </location>
</feature>
<feature type="modified residue" description="N6-succinyllysine; alternate" evidence="11">
    <location>
        <position position="70"/>
    </location>
</feature>
<feature type="modified residue" description="N6-acetyllysine" evidence="10">
    <location>
        <position position="83"/>
    </location>
</feature>
<feature type="modified residue" description="N6-acetyllysine; alternate" evidence="10">
    <location>
        <position position="261"/>
    </location>
</feature>
<feature type="modified residue" description="N6-succinyllysine; alternate" evidence="11">
    <location>
        <position position="261"/>
    </location>
</feature>
<feature type="modified residue" description="N6-succinyllysine" evidence="11">
    <location>
        <position position="303"/>
    </location>
</feature>
<feature type="modified residue" description="N6-(pyridoxal phosphate)lysine" evidence="1">
    <location>
        <position position="349"/>
    </location>
</feature>
<feature type="modified residue" description="N6-acetyllysine; alternate" evidence="10">
    <location>
        <position position="416"/>
    </location>
</feature>
<feature type="modified residue" description="N6-succinyllysine; alternate" evidence="11">
    <location>
        <position position="416"/>
    </location>
</feature>
<feature type="modified residue" description="N6-acetyllysine; alternate" evidence="10">
    <location>
        <position position="419"/>
    </location>
</feature>
<feature type="modified residue" description="N6-succinyllysine; alternate" evidence="11">
    <location>
        <position position="419"/>
    </location>
</feature>
<feature type="modified residue" description="N6-acetyllysine" evidence="10">
    <location>
        <position position="453"/>
    </location>
</feature>
<protein>
    <recommendedName>
        <fullName>Alanine--glyoxylate aminotransferase 2, mitochondrial</fullName>
        <shortName>AGT 2</shortName>
        <ecNumber evidence="2">2.6.1.44</ecNumber>
    </recommendedName>
    <alternativeName>
        <fullName>(R)-3-amino-2-methylpropionate--pyruvate transaminase</fullName>
        <ecNumber evidence="7">2.6.1.40</ecNumber>
    </alternativeName>
    <alternativeName>
        <fullName>Beta-ALAAT II</fullName>
    </alternativeName>
    <alternativeName>
        <fullName>Beta-alanine-pyruvate aminotransferase</fullName>
        <ecNumber evidence="7">2.6.1.18</ecNumber>
    </alternativeName>
    <alternativeName>
        <fullName evidence="2">D-3-aminoisobutyrate-pyruvate aminotransferase</fullName>
    </alternativeName>
    <alternativeName>
        <fullName evidence="2">D-AIBAT</fullName>
    </alternativeName>
    <alternativeName>
        <fullName evidence="2">D-beta-aminoisobutyrate-pyruvate aminotransferase</fullName>
    </alternativeName>
</protein>
<proteinExistence type="evidence at protein level"/>
<accession>Q3UEG6</accession>
<accession>B9EIZ8</accession>
<reference key="1">
    <citation type="journal article" date="2005" name="Science">
        <title>The transcriptional landscape of the mammalian genome.</title>
        <authorList>
            <person name="Carninci P."/>
            <person name="Kasukawa T."/>
            <person name="Katayama S."/>
            <person name="Gough J."/>
            <person name="Frith M.C."/>
            <person name="Maeda N."/>
            <person name="Oyama R."/>
            <person name="Ravasi T."/>
            <person name="Lenhard B."/>
            <person name="Wells C."/>
            <person name="Kodzius R."/>
            <person name="Shimokawa K."/>
            <person name="Bajic V.B."/>
            <person name="Brenner S.E."/>
            <person name="Batalov S."/>
            <person name="Forrest A.R."/>
            <person name="Zavolan M."/>
            <person name="Davis M.J."/>
            <person name="Wilming L.G."/>
            <person name="Aidinis V."/>
            <person name="Allen J.E."/>
            <person name="Ambesi-Impiombato A."/>
            <person name="Apweiler R."/>
            <person name="Aturaliya R.N."/>
            <person name="Bailey T.L."/>
            <person name="Bansal M."/>
            <person name="Baxter L."/>
            <person name="Beisel K.W."/>
            <person name="Bersano T."/>
            <person name="Bono H."/>
            <person name="Chalk A.M."/>
            <person name="Chiu K.P."/>
            <person name="Choudhary V."/>
            <person name="Christoffels A."/>
            <person name="Clutterbuck D.R."/>
            <person name="Crowe M.L."/>
            <person name="Dalla E."/>
            <person name="Dalrymple B.P."/>
            <person name="de Bono B."/>
            <person name="Della Gatta G."/>
            <person name="di Bernardo D."/>
            <person name="Down T."/>
            <person name="Engstrom P."/>
            <person name="Fagiolini M."/>
            <person name="Faulkner G."/>
            <person name="Fletcher C.F."/>
            <person name="Fukushima T."/>
            <person name="Furuno M."/>
            <person name="Futaki S."/>
            <person name="Gariboldi M."/>
            <person name="Georgii-Hemming P."/>
            <person name="Gingeras T.R."/>
            <person name="Gojobori T."/>
            <person name="Green R.E."/>
            <person name="Gustincich S."/>
            <person name="Harbers M."/>
            <person name="Hayashi Y."/>
            <person name="Hensch T.K."/>
            <person name="Hirokawa N."/>
            <person name="Hill D."/>
            <person name="Huminiecki L."/>
            <person name="Iacono M."/>
            <person name="Ikeo K."/>
            <person name="Iwama A."/>
            <person name="Ishikawa T."/>
            <person name="Jakt M."/>
            <person name="Kanapin A."/>
            <person name="Katoh M."/>
            <person name="Kawasawa Y."/>
            <person name="Kelso J."/>
            <person name="Kitamura H."/>
            <person name="Kitano H."/>
            <person name="Kollias G."/>
            <person name="Krishnan S.P."/>
            <person name="Kruger A."/>
            <person name="Kummerfeld S.K."/>
            <person name="Kurochkin I.V."/>
            <person name="Lareau L.F."/>
            <person name="Lazarevic D."/>
            <person name="Lipovich L."/>
            <person name="Liu J."/>
            <person name="Liuni S."/>
            <person name="McWilliam S."/>
            <person name="Madan Babu M."/>
            <person name="Madera M."/>
            <person name="Marchionni L."/>
            <person name="Matsuda H."/>
            <person name="Matsuzawa S."/>
            <person name="Miki H."/>
            <person name="Mignone F."/>
            <person name="Miyake S."/>
            <person name="Morris K."/>
            <person name="Mottagui-Tabar S."/>
            <person name="Mulder N."/>
            <person name="Nakano N."/>
            <person name="Nakauchi H."/>
            <person name="Ng P."/>
            <person name="Nilsson R."/>
            <person name="Nishiguchi S."/>
            <person name="Nishikawa S."/>
            <person name="Nori F."/>
            <person name="Ohara O."/>
            <person name="Okazaki Y."/>
            <person name="Orlando V."/>
            <person name="Pang K.C."/>
            <person name="Pavan W.J."/>
            <person name="Pavesi G."/>
            <person name="Pesole G."/>
            <person name="Petrovsky N."/>
            <person name="Piazza S."/>
            <person name="Reed J."/>
            <person name="Reid J.F."/>
            <person name="Ring B.Z."/>
            <person name="Ringwald M."/>
            <person name="Rost B."/>
            <person name="Ruan Y."/>
            <person name="Salzberg S.L."/>
            <person name="Sandelin A."/>
            <person name="Schneider C."/>
            <person name="Schoenbach C."/>
            <person name="Sekiguchi K."/>
            <person name="Semple C.A."/>
            <person name="Seno S."/>
            <person name="Sessa L."/>
            <person name="Sheng Y."/>
            <person name="Shibata Y."/>
            <person name="Shimada H."/>
            <person name="Shimada K."/>
            <person name="Silva D."/>
            <person name="Sinclair B."/>
            <person name="Sperling S."/>
            <person name="Stupka E."/>
            <person name="Sugiura K."/>
            <person name="Sultana R."/>
            <person name="Takenaka Y."/>
            <person name="Taki K."/>
            <person name="Tammoja K."/>
            <person name="Tan S.L."/>
            <person name="Tang S."/>
            <person name="Taylor M.S."/>
            <person name="Tegner J."/>
            <person name="Teichmann S.A."/>
            <person name="Ueda H.R."/>
            <person name="van Nimwegen E."/>
            <person name="Verardo R."/>
            <person name="Wei C.L."/>
            <person name="Yagi K."/>
            <person name="Yamanishi H."/>
            <person name="Zabarovsky E."/>
            <person name="Zhu S."/>
            <person name="Zimmer A."/>
            <person name="Hide W."/>
            <person name="Bult C."/>
            <person name="Grimmond S.M."/>
            <person name="Teasdale R.D."/>
            <person name="Liu E.T."/>
            <person name="Brusic V."/>
            <person name="Quackenbush J."/>
            <person name="Wahlestedt C."/>
            <person name="Mattick J.S."/>
            <person name="Hume D.A."/>
            <person name="Kai C."/>
            <person name="Sasaki D."/>
            <person name="Tomaru Y."/>
            <person name="Fukuda S."/>
            <person name="Kanamori-Katayama M."/>
            <person name="Suzuki M."/>
            <person name="Aoki J."/>
            <person name="Arakawa T."/>
            <person name="Iida J."/>
            <person name="Imamura K."/>
            <person name="Itoh M."/>
            <person name="Kato T."/>
            <person name="Kawaji H."/>
            <person name="Kawagashira N."/>
            <person name="Kawashima T."/>
            <person name="Kojima M."/>
            <person name="Kondo S."/>
            <person name="Konno H."/>
            <person name="Nakano K."/>
            <person name="Ninomiya N."/>
            <person name="Nishio T."/>
            <person name="Okada M."/>
            <person name="Plessy C."/>
            <person name="Shibata K."/>
            <person name="Shiraki T."/>
            <person name="Suzuki S."/>
            <person name="Tagami M."/>
            <person name="Waki K."/>
            <person name="Watahiki A."/>
            <person name="Okamura-Oho Y."/>
            <person name="Suzuki H."/>
            <person name="Kawai J."/>
            <person name="Hayashizaki Y."/>
        </authorList>
    </citation>
    <scope>NUCLEOTIDE SEQUENCE [LARGE SCALE MRNA]</scope>
    <source>
        <strain>C57BL/6J</strain>
        <tissue>Liver</tissue>
    </source>
</reference>
<reference key="2">
    <citation type="journal article" date="2004" name="Genome Res.">
        <title>The status, quality, and expansion of the NIH full-length cDNA project: the Mammalian Gene Collection (MGC).</title>
        <authorList>
            <consortium name="The MGC Project Team"/>
        </authorList>
    </citation>
    <scope>NUCLEOTIDE SEQUENCE [LARGE SCALE MRNA]</scope>
    <source>
        <tissue>Brain</tissue>
    </source>
</reference>
<reference key="3">
    <citation type="journal article" date="2010" name="Cell">
        <title>A tissue-specific atlas of mouse protein phosphorylation and expression.</title>
        <authorList>
            <person name="Huttlin E.L."/>
            <person name="Jedrychowski M.P."/>
            <person name="Elias J.E."/>
            <person name="Goswami T."/>
            <person name="Rad R."/>
            <person name="Beausoleil S.A."/>
            <person name="Villen J."/>
            <person name="Haas W."/>
            <person name="Sowa M.E."/>
            <person name="Gygi S.P."/>
        </authorList>
    </citation>
    <scope>IDENTIFICATION BY MASS SPECTROMETRY [LARGE SCALE ANALYSIS]</scope>
    <source>
        <tissue>Kidney</tissue>
        <tissue>Liver</tissue>
    </source>
</reference>
<reference key="4">
    <citation type="journal article" date="2012" name="Arterioscler. Thromb. Vasc. Biol.">
        <title>Alanine-Glyoxylate aminotransferase-2 metabolizes endogenous methylarginines, regulates NO, and controls blood pressure.</title>
        <authorList>
            <person name="Caplin B."/>
            <person name="Wang Z."/>
            <person name="Slaviero A."/>
            <person name="Tomlinson J."/>
            <person name="Dowsett L."/>
            <person name="Delahaye M."/>
            <person name="Salama A."/>
            <person name="Wheeler D.C."/>
            <person name="Leiper J."/>
        </authorList>
    </citation>
    <scope>FUNCTION</scope>
    <scope>DISRUPTION PHENOTYPE</scope>
    <scope>CATALYTIC ACTIVITY</scope>
</reference>
<reference key="5">
    <citation type="journal article" date="2012" name="J. Mass Spectrom.">
        <title>Probing AGXT2 enzyme activity in mouse tissue by applying stable isotope-labeled asymmetric dimethyl arginine as substrate.</title>
        <authorList>
            <person name="Martens-Lobenhoffer J."/>
            <person name="Rodionov R.N."/>
            <person name="Bode-Boeger S.M."/>
        </authorList>
    </citation>
    <scope>FUNCTION</scope>
    <scope>TISSUE SPECIFICITY</scope>
    <scope>CATALYTIC ACTIVITY</scope>
</reference>
<reference key="6">
    <citation type="journal article" date="2013" name="Biochem. Biophys. Res. Commun.">
        <title>In vivo evidence that Agxt2 can regulate plasma levels of dimethylarginines in mice.</title>
        <authorList>
            <person name="Kittel A."/>
            <person name="Maas R."/>
            <person name="Koenig J."/>
            <person name="Mieth M."/>
            <person name="Weiss N."/>
            <person name="Jarzebska N."/>
            <person name="Hohenstein B."/>
            <person name="Martens-Lobenhoffer J."/>
            <person name="Bode-Boeger S.M."/>
            <person name="Rodionov R.N."/>
        </authorList>
    </citation>
    <scope>FUNCTION</scope>
</reference>
<reference key="7">
    <citation type="journal article" date="2013" name="Mol. Cell">
        <title>SIRT5-mediated lysine desuccinylation impacts diverse metabolic pathways.</title>
        <authorList>
            <person name="Park J."/>
            <person name="Chen Y."/>
            <person name="Tishkoff D.X."/>
            <person name="Peng C."/>
            <person name="Tan M."/>
            <person name="Dai L."/>
            <person name="Xie Z."/>
            <person name="Zhang Y."/>
            <person name="Zwaans B.M."/>
            <person name="Skinner M.E."/>
            <person name="Lombard D.B."/>
            <person name="Zhao Y."/>
        </authorList>
    </citation>
    <scope>SUCCINYLATION [LARGE SCALE ANALYSIS] AT LYS-70; LYS-261; LYS-303; LYS-416 AND LYS-419</scope>
    <scope>IDENTIFICATION BY MASS SPECTROMETRY [LARGE SCALE ANALYSIS]</scope>
    <source>
        <tissue>Liver</tissue>
    </source>
</reference>
<reference key="8">
    <citation type="journal article" date="2013" name="Proc. Natl. Acad. Sci. U.S.A.">
        <title>Label-free quantitative proteomics of the lysine acetylome in mitochondria identifies substrates of SIRT3 in metabolic pathways.</title>
        <authorList>
            <person name="Rardin M.J."/>
            <person name="Newman J.C."/>
            <person name="Held J.M."/>
            <person name="Cusack M.P."/>
            <person name="Sorensen D.J."/>
            <person name="Li B."/>
            <person name="Schilling B."/>
            <person name="Mooney S.D."/>
            <person name="Kahn C.R."/>
            <person name="Verdin E."/>
            <person name="Gibson B.W."/>
        </authorList>
    </citation>
    <scope>ACETYLATION [LARGE SCALE ANALYSIS] AT LYS-56; LYS-70; LYS-83; LYS-261; LYS-416; LYS-419 AND LYS-453</scope>
    <scope>IDENTIFICATION BY MASS SPECTROMETRY [LARGE SCALE ANALYSIS]</scope>
    <source>
        <tissue>Liver</tissue>
    </source>
</reference>
<reference key="9">
    <citation type="journal article" date="2016" name="J. Physiol. (Lond.)">
        <title>Carnosine and anserine homeostasis in skeletal muscle and heart is controlled by beta-alanine transamination.</title>
        <authorList>
            <person name="Blancquaert L."/>
            <person name="Baba S.P."/>
            <person name="Kwiatkowski S."/>
            <person name="Stautemas J."/>
            <person name="Stegen S."/>
            <person name="Barbaresi S."/>
            <person name="Chung W."/>
            <person name="Boakye A.A."/>
            <person name="Hoetker J.D."/>
            <person name="Bhatnagar A."/>
            <person name="Delanghe J."/>
            <person name="Vanheel B."/>
            <person name="Veiga-da-Cunha M."/>
            <person name="Derave W."/>
            <person name="Everaert I."/>
        </authorList>
    </citation>
    <scope>FUNCTION</scope>
    <scope>CATALYTIC ACTIVITY</scope>
    <scope>TISSUE SPECIFICITY</scope>
    <scope>ACTIVITY REGULATION</scope>
</reference>
<sequence>MSLAWRNLQKPFYLETSLRILQMRPSLSLGASRIAVPKLTLHTKHSMPPCDFSPEKYQSLAYSRVLAIHKQHLSPVDTAYFRKPLLLHQGHMEWLFDSEGNRYLDFFSGIVTVSVGHCHPKVSAVAKKQIDRLWHTSSVFFHSPMHEYAEKLSALLPEPLKVIFLVNSGSEANDLAMVMARAHSNHTDIISFRGAYHGCSPYTLGLTNVGIYKMEVPGGIGCQSTMCPDVFRGPWGGIHCRDSPVQTVRDCSCAPDCCQAKERYIEQFKDTLNTSVATSIAGFFAEPIQGVNGVVQYPKEFLKEAFALVRERGGVCIADEVQTGFGRLGSHFWGFQTHDVLPDIVTMAKGIGNGFPMAAVVTTPEIAKSLAKRLLHFSTFGGNPLACAIGSAVLEVIEEENLQRNSQEVGTYMLLKFAKLRDEFDIVGDVRGKGLMVGIEMVQDKISRQPLPKTEVNQIHEDCKDMGLLVGRGGNFSQTFRIVPPMCVTKMEVDFAYEVFRAALIQHMERRAK</sequence>
<organism>
    <name type="scientific">Mus musculus</name>
    <name type="common">Mouse</name>
    <dbReference type="NCBI Taxonomy" id="10090"/>
    <lineage>
        <taxon>Eukaryota</taxon>
        <taxon>Metazoa</taxon>
        <taxon>Chordata</taxon>
        <taxon>Craniata</taxon>
        <taxon>Vertebrata</taxon>
        <taxon>Euteleostomi</taxon>
        <taxon>Mammalia</taxon>
        <taxon>Eutheria</taxon>
        <taxon>Euarchontoglires</taxon>
        <taxon>Glires</taxon>
        <taxon>Rodentia</taxon>
        <taxon>Myomorpha</taxon>
        <taxon>Muroidea</taxon>
        <taxon>Muridae</taxon>
        <taxon>Murinae</taxon>
        <taxon>Mus</taxon>
        <taxon>Mus</taxon>
    </lineage>
</organism>
<dbReference type="EC" id="2.6.1.44" evidence="2"/>
<dbReference type="EC" id="2.6.1.40" evidence="7"/>
<dbReference type="EC" id="2.6.1.18" evidence="7"/>
<dbReference type="EMBL" id="AK149538">
    <property type="protein sequence ID" value="BAE28945.1"/>
    <property type="molecule type" value="mRNA"/>
</dbReference>
<dbReference type="EMBL" id="BC141248">
    <property type="protein sequence ID" value="AAI41249.1"/>
    <property type="molecule type" value="mRNA"/>
</dbReference>
<dbReference type="CCDS" id="CCDS79362.1"/>
<dbReference type="RefSeq" id="NP_001297664.1">
    <property type="nucleotide sequence ID" value="NM_001310735.1"/>
</dbReference>
<dbReference type="RefSeq" id="NP_001297665.1">
    <property type="nucleotide sequence ID" value="NM_001310736.1"/>
</dbReference>
<dbReference type="SMR" id="Q3UEG6"/>
<dbReference type="BioGRID" id="234556">
    <property type="interactions" value="1"/>
</dbReference>
<dbReference type="FunCoup" id="Q3UEG6">
    <property type="interactions" value="684"/>
</dbReference>
<dbReference type="STRING" id="10090.ENSMUSP00000022858"/>
<dbReference type="GlyGen" id="Q3UEG6">
    <property type="glycosylation" value="3 sites, 2 N-linked glycans (2 sites), 1 O-linked glycan (1 site)"/>
</dbReference>
<dbReference type="iPTMnet" id="Q3UEG6"/>
<dbReference type="PhosphoSitePlus" id="Q3UEG6"/>
<dbReference type="SwissPalm" id="Q3UEG6"/>
<dbReference type="jPOST" id="Q3UEG6"/>
<dbReference type="PaxDb" id="10090-ENSMUSP00000022858"/>
<dbReference type="ProteomicsDB" id="285782"/>
<dbReference type="Antibodypedia" id="43482">
    <property type="antibodies" value="145 antibodies from 26 providers"/>
</dbReference>
<dbReference type="DNASU" id="268782"/>
<dbReference type="Ensembl" id="ENSMUST00000110542.8">
    <property type="protein sequence ID" value="ENSMUSP00000106171.2"/>
    <property type="gene ID" value="ENSMUSG00000089678.9"/>
</dbReference>
<dbReference type="GeneID" id="268782"/>
<dbReference type="KEGG" id="mmu:268782"/>
<dbReference type="UCSC" id="uc007vga.1">
    <property type="organism name" value="mouse"/>
</dbReference>
<dbReference type="AGR" id="MGI:2146052"/>
<dbReference type="CTD" id="64902"/>
<dbReference type="MGI" id="MGI:2146052">
    <property type="gene designation" value="Agxt2"/>
</dbReference>
<dbReference type="VEuPathDB" id="HostDB:ENSMUSG00000089678"/>
<dbReference type="eggNOG" id="KOG1404">
    <property type="taxonomic scope" value="Eukaryota"/>
</dbReference>
<dbReference type="GeneTree" id="ENSGT00940000156125"/>
<dbReference type="HOGENOM" id="CLU_016922_8_0_1"/>
<dbReference type="InParanoid" id="Q3UEG6"/>
<dbReference type="OrthoDB" id="10261433at2759"/>
<dbReference type="BRENDA" id="2.6.1.44">
    <property type="organism ID" value="3474"/>
</dbReference>
<dbReference type="Reactome" id="R-MMU-389661">
    <property type="pathway name" value="Glyoxylate metabolism and glycine degradation"/>
</dbReference>
<dbReference type="SABIO-RK" id="Q3UEG6"/>
<dbReference type="BioGRID-ORCS" id="268782">
    <property type="hits" value="2 hits in 63 CRISPR screens"/>
</dbReference>
<dbReference type="ChiTaRS" id="Agxt2">
    <property type="organism name" value="mouse"/>
</dbReference>
<dbReference type="PRO" id="PR:Q3UEG6"/>
<dbReference type="Proteomes" id="UP000000589">
    <property type="component" value="Chromosome 15"/>
</dbReference>
<dbReference type="RNAct" id="Q3UEG6">
    <property type="molecule type" value="protein"/>
</dbReference>
<dbReference type="Bgee" id="ENSMUSG00000089678">
    <property type="expression patterns" value="Expressed in left lobe of liver and 21 other cell types or tissues"/>
</dbReference>
<dbReference type="ExpressionAtlas" id="Q3UEG6">
    <property type="expression patterns" value="baseline and differential"/>
</dbReference>
<dbReference type="GO" id="GO:0005739">
    <property type="term" value="C:mitochondrion"/>
    <property type="evidence" value="ECO:0000314"/>
    <property type="project" value="MGI"/>
</dbReference>
<dbReference type="GO" id="GO:0047305">
    <property type="term" value="F:(R)-3-amino-2-methylpropionate-pyruvate transaminase activity"/>
    <property type="evidence" value="ECO:0000314"/>
    <property type="project" value="UniProtKB"/>
</dbReference>
<dbReference type="GO" id="GO:0008453">
    <property type="term" value="F:alanine-glyoxylate transaminase activity"/>
    <property type="evidence" value="ECO:0000250"/>
    <property type="project" value="UniProtKB"/>
</dbReference>
<dbReference type="GO" id="GO:0016223">
    <property type="term" value="F:beta-alanine:pyruvate transaminase activity"/>
    <property type="evidence" value="ECO:0000314"/>
    <property type="project" value="MGI"/>
</dbReference>
<dbReference type="GO" id="GO:0030170">
    <property type="term" value="F:pyridoxal phosphate binding"/>
    <property type="evidence" value="ECO:0007669"/>
    <property type="project" value="InterPro"/>
</dbReference>
<dbReference type="GO" id="GO:0019265">
    <property type="term" value="P:glycine biosynthetic process, by transamination of glyoxylate"/>
    <property type="evidence" value="ECO:0007669"/>
    <property type="project" value="Ensembl"/>
</dbReference>
<dbReference type="GO" id="GO:0009436">
    <property type="term" value="P:glyoxylate catabolic process"/>
    <property type="evidence" value="ECO:0007669"/>
    <property type="project" value="Ensembl"/>
</dbReference>
<dbReference type="GO" id="GO:0019481">
    <property type="term" value="P:L-alanine catabolic process, by transamination"/>
    <property type="evidence" value="ECO:0007669"/>
    <property type="project" value="Ensembl"/>
</dbReference>
<dbReference type="GO" id="GO:2001299">
    <property type="term" value="P:N(omega),N(omega)-dimethyl-L-arginine catabolic process"/>
    <property type="evidence" value="ECO:0000250"/>
    <property type="project" value="UniProtKB"/>
</dbReference>
<dbReference type="GO" id="GO:0045429">
    <property type="term" value="P:positive regulation of nitric oxide biosynthetic process"/>
    <property type="evidence" value="ECO:0007669"/>
    <property type="project" value="Ensembl"/>
</dbReference>
<dbReference type="CDD" id="cd00610">
    <property type="entry name" value="OAT_like"/>
    <property type="match status" value="1"/>
</dbReference>
<dbReference type="FunFam" id="3.40.640.10:FF:000055">
    <property type="entry name" value="Alanine--glyoxylate aminotransferase 2, mitochondrial"/>
    <property type="match status" value="1"/>
</dbReference>
<dbReference type="FunFam" id="3.90.1150.10:FF:000105">
    <property type="entry name" value="alanine--glyoxylate aminotransferase 2, mitochondrial isoform X3"/>
    <property type="match status" value="1"/>
</dbReference>
<dbReference type="Gene3D" id="3.90.1150.10">
    <property type="entry name" value="Aspartate Aminotransferase, domain 1"/>
    <property type="match status" value="1"/>
</dbReference>
<dbReference type="Gene3D" id="3.40.640.10">
    <property type="entry name" value="Type I PLP-dependent aspartate aminotransferase-like (Major domain)"/>
    <property type="match status" value="1"/>
</dbReference>
<dbReference type="InterPro" id="IPR005814">
    <property type="entry name" value="Aminotrans_3"/>
</dbReference>
<dbReference type="InterPro" id="IPR049704">
    <property type="entry name" value="Aminotrans_3_PPA_site"/>
</dbReference>
<dbReference type="InterPro" id="IPR015424">
    <property type="entry name" value="PyrdxlP-dep_Trfase"/>
</dbReference>
<dbReference type="InterPro" id="IPR015421">
    <property type="entry name" value="PyrdxlP-dep_Trfase_major"/>
</dbReference>
<dbReference type="InterPro" id="IPR015422">
    <property type="entry name" value="PyrdxlP-dep_Trfase_small"/>
</dbReference>
<dbReference type="PANTHER" id="PTHR45688">
    <property type="match status" value="1"/>
</dbReference>
<dbReference type="PANTHER" id="PTHR45688:SF3">
    <property type="entry name" value="ALANINE--GLYOXYLATE AMINOTRANSFERASE 2, MITOCHONDRIAL"/>
    <property type="match status" value="1"/>
</dbReference>
<dbReference type="Pfam" id="PF00202">
    <property type="entry name" value="Aminotran_3"/>
    <property type="match status" value="1"/>
</dbReference>
<dbReference type="PIRSF" id="PIRSF000521">
    <property type="entry name" value="Transaminase_4ab_Lys_Orn"/>
    <property type="match status" value="1"/>
</dbReference>
<dbReference type="SUPFAM" id="SSF53383">
    <property type="entry name" value="PLP-dependent transferases"/>
    <property type="match status" value="1"/>
</dbReference>
<dbReference type="PROSITE" id="PS00600">
    <property type="entry name" value="AA_TRANSFER_CLASS_3"/>
    <property type="match status" value="1"/>
</dbReference>
<evidence type="ECO:0000250" key="1"/>
<evidence type="ECO:0000250" key="2">
    <source>
        <dbReference type="UniProtKB" id="Q64565"/>
    </source>
</evidence>
<evidence type="ECO:0000250" key="3">
    <source>
        <dbReference type="UniProtKB" id="Q9BYV1"/>
    </source>
</evidence>
<evidence type="ECO:0000269" key="4">
    <source>
    </source>
</evidence>
<evidence type="ECO:0000269" key="5">
    <source>
    </source>
</evidence>
<evidence type="ECO:0000269" key="6">
    <source>
    </source>
</evidence>
<evidence type="ECO:0000269" key="7">
    <source>
    </source>
</evidence>
<evidence type="ECO:0000305" key="8"/>
<evidence type="ECO:0000305" key="9">
    <source>
    </source>
</evidence>
<evidence type="ECO:0007744" key="10">
    <source>
    </source>
</evidence>
<evidence type="ECO:0007744" key="11">
    <source>
    </source>
</evidence>
<name>AGT2_MOUSE</name>